<reference key="1">
    <citation type="submission" date="2007-03" db="EMBL/GenBank/DDBJ databases">
        <title>Complete sequence of Prosthecochloris vibrioformis DSM 265.</title>
        <authorList>
            <consortium name="US DOE Joint Genome Institute"/>
            <person name="Copeland A."/>
            <person name="Lucas S."/>
            <person name="Lapidus A."/>
            <person name="Barry K."/>
            <person name="Detter J.C."/>
            <person name="Glavina del Rio T."/>
            <person name="Hammon N."/>
            <person name="Israni S."/>
            <person name="Pitluck S."/>
            <person name="Schmutz J."/>
            <person name="Larimer F."/>
            <person name="Land M."/>
            <person name="Hauser L."/>
            <person name="Mikhailova N."/>
            <person name="Li T."/>
            <person name="Overmann J."/>
            <person name="Schuster S.C."/>
            <person name="Bryant D.A."/>
            <person name="Richardson P."/>
        </authorList>
    </citation>
    <scope>NUCLEOTIDE SEQUENCE [LARGE SCALE GENOMIC DNA]</scope>
    <source>
        <strain>DSM 265 / 1930</strain>
    </source>
</reference>
<proteinExistence type="inferred from homology"/>
<accession>A4SFU6</accession>
<comment type="function">
    <text evidence="1">The key enzymatic reactions in nitrogen fixation are catalyzed by the nitrogenase complex, which has 2 components: the iron protein and the molybdenum-iron protein.</text>
</comment>
<comment type="catalytic activity">
    <reaction evidence="1">
        <text>N2 + 8 reduced [2Fe-2S]-[ferredoxin] + 16 ATP + 16 H2O = H2 + 8 oxidized [2Fe-2S]-[ferredoxin] + 2 NH4(+) + 16 ADP + 16 phosphate + 6 H(+)</text>
        <dbReference type="Rhea" id="RHEA:21448"/>
        <dbReference type="Rhea" id="RHEA-COMP:10000"/>
        <dbReference type="Rhea" id="RHEA-COMP:10001"/>
        <dbReference type="ChEBI" id="CHEBI:15377"/>
        <dbReference type="ChEBI" id="CHEBI:15378"/>
        <dbReference type="ChEBI" id="CHEBI:17997"/>
        <dbReference type="ChEBI" id="CHEBI:18276"/>
        <dbReference type="ChEBI" id="CHEBI:28938"/>
        <dbReference type="ChEBI" id="CHEBI:30616"/>
        <dbReference type="ChEBI" id="CHEBI:33737"/>
        <dbReference type="ChEBI" id="CHEBI:33738"/>
        <dbReference type="ChEBI" id="CHEBI:43474"/>
        <dbReference type="ChEBI" id="CHEBI:456216"/>
        <dbReference type="EC" id="1.18.6.1"/>
    </reaction>
</comment>
<comment type="cofactor">
    <cofactor evidence="1">
        <name>[4Fe-4S] cluster</name>
        <dbReference type="ChEBI" id="CHEBI:49883"/>
    </cofactor>
    <text evidence="1">Binds 1 [4Fe-4S] cluster per dimer.</text>
</comment>
<comment type="subunit">
    <text evidence="1">Homodimer.</text>
</comment>
<comment type="PTM">
    <text evidence="1">The reversible ADP-ribosylation of Arg-97 inactivates the nitrogenase reductase and regulates nitrogenase activity.</text>
</comment>
<comment type="similarity">
    <text evidence="1">Belongs to the NifH/BchL/ChlL family.</text>
</comment>
<keyword id="KW-0004">4Fe-4S</keyword>
<keyword id="KW-0013">ADP-ribosylation</keyword>
<keyword id="KW-0067">ATP-binding</keyword>
<keyword id="KW-0408">Iron</keyword>
<keyword id="KW-0411">Iron-sulfur</keyword>
<keyword id="KW-0479">Metal-binding</keyword>
<keyword id="KW-0535">Nitrogen fixation</keyword>
<keyword id="KW-0547">Nucleotide-binding</keyword>
<keyword id="KW-0560">Oxidoreductase</keyword>
<evidence type="ECO:0000255" key="1">
    <source>
        <dbReference type="HAMAP-Rule" id="MF_00533"/>
    </source>
</evidence>
<organism>
    <name type="scientific">Chlorobium phaeovibrioides (strain DSM 265 / 1930)</name>
    <name type="common">Prosthecochloris vibrioformis (strain DSM 265)</name>
    <dbReference type="NCBI Taxonomy" id="290318"/>
    <lineage>
        <taxon>Bacteria</taxon>
        <taxon>Pseudomonadati</taxon>
        <taxon>Chlorobiota</taxon>
        <taxon>Chlorobiia</taxon>
        <taxon>Chlorobiales</taxon>
        <taxon>Chlorobiaceae</taxon>
        <taxon>Chlorobium/Pelodictyon group</taxon>
        <taxon>Chlorobium</taxon>
    </lineage>
</organism>
<gene>
    <name evidence="1" type="primary">nifH</name>
    <name type="ordered locus">Cvib_1343</name>
</gene>
<dbReference type="EC" id="1.18.6.1" evidence="1"/>
<dbReference type="EMBL" id="CP000607">
    <property type="protein sequence ID" value="ABP37355.1"/>
    <property type="molecule type" value="Genomic_DNA"/>
</dbReference>
<dbReference type="SMR" id="A4SFU6"/>
<dbReference type="STRING" id="290318.Cvib_1343"/>
<dbReference type="KEGG" id="pvi:Cvib_1343"/>
<dbReference type="eggNOG" id="COG1348">
    <property type="taxonomic scope" value="Bacteria"/>
</dbReference>
<dbReference type="HOGENOM" id="CLU_059373_0_0_10"/>
<dbReference type="OrthoDB" id="9778641at2"/>
<dbReference type="GO" id="GO:0051539">
    <property type="term" value="F:4 iron, 4 sulfur cluster binding"/>
    <property type="evidence" value="ECO:0007669"/>
    <property type="project" value="UniProtKB-KW"/>
</dbReference>
<dbReference type="GO" id="GO:0005524">
    <property type="term" value="F:ATP binding"/>
    <property type="evidence" value="ECO:0007669"/>
    <property type="project" value="UniProtKB-UniRule"/>
</dbReference>
<dbReference type="GO" id="GO:0046872">
    <property type="term" value="F:metal ion binding"/>
    <property type="evidence" value="ECO:0007669"/>
    <property type="project" value="UniProtKB-KW"/>
</dbReference>
<dbReference type="GO" id="GO:0016163">
    <property type="term" value="F:nitrogenase activity"/>
    <property type="evidence" value="ECO:0007669"/>
    <property type="project" value="UniProtKB-UniRule"/>
</dbReference>
<dbReference type="GO" id="GO:0009399">
    <property type="term" value="P:nitrogen fixation"/>
    <property type="evidence" value="ECO:0007669"/>
    <property type="project" value="UniProtKB-UniRule"/>
</dbReference>
<dbReference type="CDD" id="cd02040">
    <property type="entry name" value="NifH"/>
    <property type="match status" value="1"/>
</dbReference>
<dbReference type="Gene3D" id="3.40.50.300">
    <property type="entry name" value="P-loop containing nucleotide triphosphate hydrolases"/>
    <property type="match status" value="1"/>
</dbReference>
<dbReference type="HAMAP" id="MF_00533">
    <property type="entry name" value="NifH"/>
    <property type="match status" value="1"/>
</dbReference>
<dbReference type="InterPro" id="IPR030655">
    <property type="entry name" value="NifH/chlL_CS"/>
</dbReference>
<dbReference type="InterPro" id="IPR000392">
    <property type="entry name" value="NifH/frxC"/>
</dbReference>
<dbReference type="InterPro" id="IPR005977">
    <property type="entry name" value="Nitrogenase_Fe_NifH"/>
</dbReference>
<dbReference type="InterPro" id="IPR027417">
    <property type="entry name" value="P-loop_NTPase"/>
</dbReference>
<dbReference type="NCBIfam" id="TIGR01287">
    <property type="entry name" value="nifH"/>
    <property type="match status" value="1"/>
</dbReference>
<dbReference type="PANTHER" id="PTHR42864">
    <property type="entry name" value="LIGHT-INDEPENDENT PROTOCHLOROPHYLLIDE REDUCTASE IRON-SULFUR ATP-BINDING PROTEIN"/>
    <property type="match status" value="1"/>
</dbReference>
<dbReference type="PANTHER" id="PTHR42864:SF2">
    <property type="entry name" value="LIGHT-INDEPENDENT PROTOCHLOROPHYLLIDE REDUCTASE IRON-SULFUR ATP-BINDING PROTEIN"/>
    <property type="match status" value="1"/>
</dbReference>
<dbReference type="Pfam" id="PF00142">
    <property type="entry name" value="Fer4_NifH"/>
    <property type="match status" value="1"/>
</dbReference>
<dbReference type="PIRSF" id="PIRSF000363">
    <property type="entry name" value="Nitrogenase_iron"/>
    <property type="match status" value="1"/>
</dbReference>
<dbReference type="PRINTS" id="PR00091">
    <property type="entry name" value="NITROGNASEII"/>
</dbReference>
<dbReference type="SUPFAM" id="SSF52540">
    <property type="entry name" value="P-loop containing nucleoside triphosphate hydrolases"/>
    <property type="match status" value="1"/>
</dbReference>
<dbReference type="PROSITE" id="PS00746">
    <property type="entry name" value="NIFH_FRXC_1"/>
    <property type="match status" value="1"/>
</dbReference>
<dbReference type="PROSITE" id="PS00692">
    <property type="entry name" value="NIFH_FRXC_2"/>
    <property type="match status" value="1"/>
</dbReference>
<dbReference type="PROSITE" id="PS51026">
    <property type="entry name" value="NIFH_FRXC_3"/>
    <property type="match status" value="1"/>
</dbReference>
<feature type="chain" id="PRO_1000211881" description="Nitrogenase iron protein">
    <location>
        <begin position="1"/>
        <end position="274"/>
    </location>
</feature>
<feature type="binding site" evidence="1">
    <location>
        <begin position="8"/>
        <end position="15"/>
    </location>
    <ligand>
        <name>ATP</name>
        <dbReference type="ChEBI" id="CHEBI:30616"/>
    </ligand>
</feature>
<feature type="binding site" evidence="1">
    <location>
        <position position="94"/>
    </location>
    <ligand>
        <name>[4Fe-4S] cluster</name>
        <dbReference type="ChEBI" id="CHEBI:49883"/>
        <note>ligand shared between dimeric partners</note>
    </ligand>
</feature>
<feature type="binding site" evidence="1">
    <location>
        <position position="131"/>
    </location>
    <ligand>
        <name>[4Fe-4S] cluster</name>
        <dbReference type="ChEBI" id="CHEBI:49883"/>
        <note>ligand shared between dimeric partners</note>
    </ligand>
</feature>
<feature type="modified residue" description="ADP-ribosylarginine; by dinitrogenase reductase ADP-ribosyltransferase" evidence="1">
    <location>
        <position position="97"/>
    </location>
</feature>
<name>NIFH_CHLPM</name>
<protein>
    <recommendedName>
        <fullName evidence="1">Nitrogenase iron protein</fullName>
        <ecNumber evidence="1">1.18.6.1</ecNumber>
    </recommendedName>
    <alternativeName>
        <fullName evidence="1">Nitrogenase Fe protein</fullName>
    </alternativeName>
    <alternativeName>
        <fullName evidence="1">Nitrogenase component II</fullName>
    </alternativeName>
    <alternativeName>
        <fullName evidence="1">Nitrogenase reductase</fullName>
    </alternativeName>
</protein>
<sequence>MRKVAIYGKGGIGKSTTTQNTVAALAEMGKKVMVVGCDPKADSTRLLLGGLQQKTVLDTLREEGEEVELEDIIKGGYKNTRCTESGGPEPGVGCAGRGIITSVNLLEQLGAYDDEWELDYVFYDVLGDVVCGGFAMPIRDGKAEEIYIVCSGEMMAMYAANNICKGILKYADAGGVRLGGLICNSRQVENEKAMIEELARKIGTQMIHFVPRDNFVQRAEINRKTVIDYDPTHKQADEYRALAQKINDNKMFVIPKPLEIEELESLLIEFGIAN</sequence>